<proteinExistence type="inferred from homology"/>
<evidence type="ECO:0000255" key="1">
    <source>
        <dbReference type="HAMAP-Rule" id="MF_01353"/>
    </source>
</evidence>
<feature type="chain" id="PRO_0000352215" description="NAD(P)H-quinone oxidoreductase subunit N">
    <location>
        <begin position="1"/>
        <end position="158"/>
    </location>
</feature>
<comment type="function">
    <text evidence="1">NDH-1 shuttles electrons from an unknown electron donor, via FMN and iron-sulfur (Fe-S) centers, to quinones in the respiratory and/or the photosynthetic chain. The immediate electron acceptor for the enzyme in this species is believed to be plastoquinone. Couples the redox reaction to proton translocation, and thus conserves the redox energy in a proton gradient. Cyanobacterial NDH-1 also plays a role in inorganic carbon-concentration.</text>
</comment>
<comment type="catalytic activity">
    <reaction evidence="1">
        <text>a plastoquinone + NADH + (n+1) H(+)(in) = a plastoquinol + NAD(+) + n H(+)(out)</text>
        <dbReference type="Rhea" id="RHEA:42608"/>
        <dbReference type="Rhea" id="RHEA-COMP:9561"/>
        <dbReference type="Rhea" id="RHEA-COMP:9562"/>
        <dbReference type="ChEBI" id="CHEBI:15378"/>
        <dbReference type="ChEBI" id="CHEBI:17757"/>
        <dbReference type="ChEBI" id="CHEBI:57540"/>
        <dbReference type="ChEBI" id="CHEBI:57945"/>
        <dbReference type="ChEBI" id="CHEBI:62192"/>
    </reaction>
</comment>
<comment type="catalytic activity">
    <reaction evidence="1">
        <text>a plastoquinone + NADPH + (n+1) H(+)(in) = a plastoquinol + NADP(+) + n H(+)(out)</text>
        <dbReference type="Rhea" id="RHEA:42612"/>
        <dbReference type="Rhea" id="RHEA-COMP:9561"/>
        <dbReference type="Rhea" id="RHEA-COMP:9562"/>
        <dbReference type="ChEBI" id="CHEBI:15378"/>
        <dbReference type="ChEBI" id="CHEBI:17757"/>
        <dbReference type="ChEBI" id="CHEBI:57783"/>
        <dbReference type="ChEBI" id="CHEBI:58349"/>
        <dbReference type="ChEBI" id="CHEBI:62192"/>
    </reaction>
</comment>
<comment type="subunit">
    <text evidence="1">NDH-1 can be composed of about 15 different subunits; different subcomplexes with different compositions have been identified which probably have different functions.</text>
</comment>
<comment type="subcellular location">
    <subcellularLocation>
        <location evidence="1">Cellular thylakoid membrane</location>
        <topology evidence="1">Peripheral membrane protein</topology>
        <orientation evidence="1">Cytoplasmic side</orientation>
    </subcellularLocation>
</comment>
<comment type="similarity">
    <text evidence="1">Belongs to the complex I NdhN subunit family.</text>
</comment>
<protein>
    <recommendedName>
        <fullName evidence="1">NAD(P)H-quinone oxidoreductase subunit N</fullName>
        <ecNumber evidence="1">7.1.1.-</ecNumber>
    </recommendedName>
    <alternativeName>
        <fullName evidence="1">NAD(P)H dehydrogenase I subunit N</fullName>
        <shortName evidence="1">NDH-1 subunit N</shortName>
        <shortName evidence="1">NDH-N</shortName>
    </alternativeName>
</protein>
<organism>
    <name type="scientific">Crocosphaera subtropica (strain ATCC 51142 / BH68)</name>
    <name type="common">Cyanothece sp. (strain ATCC 51142)</name>
    <dbReference type="NCBI Taxonomy" id="43989"/>
    <lineage>
        <taxon>Bacteria</taxon>
        <taxon>Bacillati</taxon>
        <taxon>Cyanobacteriota</taxon>
        <taxon>Cyanophyceae</taxon>
        <taxon>Oscillatoriophycideae</taxon>
        <taxon>Chroococcales</taxon>
        <taxon>Aphanothecaceae</taxon>
        <taxon>Crocosphaera</taxon>
        <taxon>Crocosphaera subtropica</taxon>
    </lineage>
</organism>
<sequence>MALLTTGKGFVRALEKSGALGVYAPLEGGFEGRYQRRLRTNGYDSLSLTARGLGDVSAYLMGVHGVRPPHLGKKNIGQGAAVGPIYFVPPIAAYQLESLSPQSKGLVLWILEGYILSKAELEYLVSLPQQEPRIKVVVELGGERYFRWEPLENLIAVA</sequence>
<gene>
    <name evidence="1" type="primary">ndhN</name>
    <name type="ordered locus">cce_3395</name>
</gene>
<name>NDHN_CROS5</name>
<keyword id="KW-0472">Membrane</keyword>
<keyword id="KW-0520">NAD</keyword>
<keyword id="KW-0521">NADP</keyword>
<keyword id="KW-0618">Plastoquinone</keyword>
<keyword id="KW-0874">Quinone</keyword>
<keyword id="KW-1185">Reference proteome</keyword>
<keyword id="KW-0793">Thylakoid</keyword>
<keyword id="KW-1278">Translocase</keyword>
<keyword id="KW-0813">Transport</keyword>
<dbReference type="EC" id="7.1.1.-" evidence="1"/>
<dbReference type="EMBL" id="CP000806">
    <property type="protein sequence ID" value="ACB52743.1"/>
    <property type="molecule type" value="Genomic_DNA"/>
</dbReference>
<dbReference type="RefSeq" id="WP_009545435.1">
    <property type="nucleotide sequence ID" value="NC_010546.1"/>
</dbReference>
<dbReference type="SMR" id="B1WYX9"/>
<dbReference type="STRING" id="43989.cce_3395"/>
<dbReference type="KEGG" id="cyt:cce_3395"/>
<dbReference type="eggNOG" id="ENOG502ZBMI">
    <property type="taxonomic scope" value="Bacteria"/>
</dbReference>
<dbReference type="HOGENOM" id="CLU_087432_0_0_3"/>
<dbReference type="OrthoDB" id="510798at2"/>
<dbReference type="Proteomes" id="UP000001203">
    <property type="component" value="Chromosome circular"/>
</dbReference>
<dbReference type="GO" id="GO:0031676">
    <property type="term" value="C:plasma membrane-derived thylakoid membrane"/>
    <property type="evidence" value="ECO:0007669"/>
    <property type="project" value="UniProtKB-SubCell"/>
</dbReference>
<dbReference type="GO" id="GO:0016655">
    <property type="term" value="F:oxidoreductase activity, acting on NAD(P)H, quinone or similar compound as acceptor"/>
    <property type="evidence" value="ECO:0007669"/>
    <property type="project" value="UniProtKB-UniRule"/>
</dbReference>
<dbReference type="GO" id="GO:0048038">
    <property type="term" value="F:quinone binding"/>
    <property type="evidence" value="ECO:0007669"/>
    <property type="project" value="UniProtKB-KW"/>
</dbReference>
<dbReference type="HAMAP" id="MF_01353">
    <property type="entry name" value="NDH1_NDH1N"/>
    <property type="match status" value="1"/>
</dbReference>
<dbReference type="InterPro" id="IPR020874">
    <property type="entry name" value="NAD(P)H-quinone_OxRdtase_su_N"/>
</dbReference>
<dbReference type="PANTHER" id="PTHR35515">
    <property type="entry name" value="NAD(P)H-QUINONE OXIDOREDUCTASE SUBUNIT N, CHLOROPLASTIC"/>
    <property type="match status" value="1"/>
</dbReference>
<dbReference type="PANTHER" id="PTHR35515:SF1">
    <property type="entry name" value="NAD(P)H-QUINONE OXIDOREDUCTASE SUBUNIT N, CHLOROPLASTIC"/>
    <property type="match status" value="1"/>
</dbReference>
<dbReference type="Pfam" id="PF11909">
    <property type="entry name" value="NdhN"/>
    <property type="match status" value="1"/>
</dbReference>
<reference key="1">
    <citation type="journal article" date="2008" name="Proc. Natl. Acad. Sci. U.S.A.">
        <title>The genome of Cyanothece 51142, a unicellular diazotrophic cyanobacterium important in the marine nitrogen cycle.</title>
        <authorList>
            <person name="Welsh E.A."/>
            <person name="Liberton M."/>
            <person name="Stoeckel J."/>
            <person name="Loh T."/>
            <person name="Elvitigala T."/>
            <person name="Wang C."/>
            <person name="Wollam A."/>
            <person name="Fulton R.S."/>
            <person name="Clifton S.W."/>
            <person name="Jacobs J.M."/>
            <person name="Aurora R."/>
            <person name="Ghosh B.K."/>
            <person name="Sherman L.A."/>
            <person name="Smith R.D."/>
            <person name="Wilson R.K."/>
            <person name="Pakrasi H.B."/>
        </authorList>
    </citation>
    <scope>NUCLEOTIDE SEQUENCE [LARGE SCALE GENOMIC DNA]</scope>
    <source>
        <strain>ATCC 51142 / BH68</strain>
    </source>
</reference>
<accession>B1WYX9</accession>